<evidence type="ECO:0000255" key="1">
    <source>
        <dbReference type="HAMAP-Rule" id="MF_00353"/>
    </source>
</evidence>
<reference key="1">
    <citation type="journal article" date="2007" name="PLoS Genet.">
        <title>Patterns and implications of gene gain and loss in the evolution of Prochlorococcus.</title>
        <authorList>
            <person name="Kettler G.C."/>
            <person name="Martiny A.C."/>
            <person name="Huang K."/>
            <person name="Zucker J."/>
            <person name="Coleman M.L."/>
            <person name="Rodrigue S."/>
            <person name="Chen F."/>
            <person name="Lapidus A."/>
            <person name="Ferriera S."/>
            <person name="Johnson J."/>
            <person name="Steglich C."/>
            <person name="Church G.M."/>
            <person name="Richardson P."/>
            <person name="Chisholm S.W."/>
        </authorList>
    </citation>
    <scope>NUCLEOTIDE SEQUENCE [LARGE SCALE GENOMIC DNA]</scope>
    <source>
        <strain>NATL1A</strain>
    </source>
</reference>
<comment type="function">
    <text evidence="1">Component of the dark-operative protochlorophyllide reductase (DPOR) that uses Mg-ATP and reduced ferredoxin to reduce ring D of protochlorophyllide (Pchlide) to form chlorophyllide a (Chlide). This reaction is light-independent. The NB-protein (ChlN-ChlB) is the catalytic component of the complex.</text>
</comment>
<comment type="catalytic activity">
    <reaction evidence="1">
        <text>chlorophyllide a + oxidized 2[4Fe-4S]-[ferredoxin] + 2 ADP + 2 phosphate = protochlorophyllide a + reduced 2[4Fe-4S]-[ferredoxin] + 2 ATP + 2 H2O</text>
        <dbReference type="Rhea" id="RHEA:28202"/>
        <dbReference type="Rhea" id="RHEA-COMP:10002"/>
        <dbReference type="Rhea" id="RHEA-COMP:10004"/>
        <dbReference type="ChEBI" id="CHEBI:15377"/>
        <dbReference type="ChEBI" id="CHEBI:30616"/>
        <dbReference type="ChEBI" id="CHEBI:33722"/>
        <dbReference type="ChEBI" id="CHEBI:33723"/>
        <dbReference type="ChEBI" id="CHEBI:43474"/>
        <dbReference type="ChEBI" id="CHEBI:83348"/>
        <dbReference type="ChEBI" id="CHEBI:83350"/>
        <dbReference type="ChEBI" id="CHEBI:456216"/>
        <dbReference type="EC" id="1.3.7.7"/>
    </reaction>
</comment>
<comment type="cofactor">
    <cofactor evidence="1">
        <name>[4Fe-4S] cluster</name>
        <dbReference type="ChEBI" id="CHEBI:49883"/>
    </cofactor>
    <text evidence="1">Binds 1 [4Fe-4S] cluster per heterodimer. The cluster is bound at the heterodimer interface by residues from both subunits.</text>
</comment>
<comment type="pathway">
    <text evidence="1">Porphyrin-containing compound metabolism; chlorophyll biosynthesis (light-independent).</text>
</comment>
<comment type="subunit">
    <text evidence="1">Protochlorophyllide reductase is composed of three subunits; ChlL, ChlN and ChlB. Forms a heterotetramer of two ChlB and two ChlN subunits.</text>
</comment>
<comment type="similarity">
    <text evidence="1">Belongs to the ChlB/BchB/BchZ family.</text>
</comment>
<feature type="chain" id="PRO_1000048407" description="Light-independent protochlorophyllide reductase subunit B">
    <location>
        <begin position="1"/>
        <end position="525"/>
    </location>
</feature>
<feature type="active site" description="Proton donor" evidence="1">
    <location>
        <position position="286"/>
    </location>
</feature>
<feature type="binding site" evidence="1">
    <location>
        <position position="36"/>
    </location>
    <ligand>
        <name>[4Fe-4S] cluster</name>
        <dbReference type="ChEBI" id="CHEBI:49883"/>
        <note>ligand shared with heterodimeric partner</note>
    </ligand>
</feature>
<feature type="binding site" evidence="1">
    <location>
        <begin position="421"/>
        <end position="422"/>
    </location>
    <ligand>
        <name>substrate</name>
    </ligand>
</feature>
<proteinExistence type="inferred from homology"/>
<gene>
    <name evidence="1" type="primary">chlB</name>
    <name type="ordered locus">NATL1_05991</name>
</gene>
<sequence>MELTLWTYEGPPHIGAMRIATSMKKLHYVLHAPQGDTYADLLFTMIERRGSRPPVTYTTFQARDLGGDTAELVKGHIKEAVDRFKPEALLVGESCTAELIQDQPGSLAKGMGFDIPIVSLELPAYSKKENWGGSETFYQIVRSLLKDHSRESKQSWQEEKRRPRVNLLGPTLLGFRCRDDVLEIQKLLGQYGIDVNVVAPLGASPADILRIPNADVNVCLYPEIAESTCIWLERNLNIPFTTTVPLGVGATQDFLKELHKVLEMEIPQSVNESNNSKLTWYSNSVDSNYLTGKRVFIFGDGTHALAAARIANEELGFKVVGLGTYSREMARKVRPAAKALGLEALITNDYLEVEDAIKETSPELVLGTQMERHSAKRLGIPCAVISTPMHVQDVPARYSPQMGWEGANVIFDDWVHPLMMGLEEHLIGMFKHDFEFVDGHQSHLGHLGGKGTQNTTKEAIKTNLQDSVITDGDPIWTHEGEKELSKIPFFVRGKVRRNTENYARQAGCREINEETLYDAKAHYKA</sequence>
<accession>A2C101</accession>
<keyword id="KW-0004">4Fe-4S</keyword>
<keyword id="KW-0067">ATP-binding</keyword>
<keyword id="KW-0149">Chlorophyll biosynthesis</keyword>
<keyword id="KW-0408">Iron</keyword>
<keyword id="KW-0411">Iron-sulfur</keyword>
<keyword id="KW-0479">Metal-binding</keyword>
<keyword id="KW-0547">Nucleotide-binding</keyword>
<keyword id="KW-0560">Oxidoreductase</keyword>
<keyword id="KW-0602">Photosynthesis</keyword>
<dbReference type="EC" id="1.3.7.7" evidence="1"/>
<dbReference type="EMBL" id="CP000553">
    <property type="protein sequence ID" value="ABM75161.1"/>
    <property type="molecule type" value="Genomic_DNA"/>
</dbReference>
<dbReference type="RefSeq" id="WP_011823334.1">
    <property type="nucleotide sequence ID" value="NC_008819.1"/>
</dbReference>
<dbReference type="SMR" id="A2C101"/>
<dbReference type="KEGG" id="pme:NATL1_05991"/>
<dbReference type="eggNOG" id="COG2710">
    <property type="taxonomic scope" value="Bacteria"/>
</dbReference>
<dbReference type="HOGENOM" id="CLU_025470_0_0_3"/>
<dbReference type="UniPathway" id="UPA00670"/>
<dbReference type="Proteomes" id="UP000002592">
    <property type="component" value="Chromosome"/>
</dbReference>
<dbReference type="GO" id="GO:0051539">
    <property type="term" value="F:4 iron, 4 sulfur cluster binding"/>
    <property type="evidence" value="ECO:0007669"/>
    <property type="project" value="UniProtKB-UniRule"/>
</dbReference>
<dbReference type="GO" id="GO:0005524">
    <property type="term" value="F:ATP binding"/>
    <property type="evidence" value="ECO:0007669"/>
    <property type="project" value="UniProtKB-UniRule"/>
</dbReference>
<dbReference type="GO" id="GO:0046872">
    <property type="term" value="F:metal ion binding"/>
    <property type="evidence" value="ECO:0007669"/>
    <property type="project" value="UniProtKB-KW"/>
</dbReference>
<dbReference type="GO" id="GO:0016730">
    <property type="term" value="F:oxidoreductase activity, acting on iron-sulfur proteins as donors"/>
    <property type="evidence" value="ECO:0007669"/>
    <property type="project" value="InterPro"/>
</dbReference>
<dbReference type="GO" id="GO:0016636">
    <property type="term" value="F:oxidoreductase activity, acting on the CH-CH group of donors, iron-sulfur protein as acceptor"/>
    <property type="evidence" value="ECO:0007669"/>
    <property type="project" value="UniProtKB-UniRule"/>
</dbReference>
<dbReference type="GO" id="GO:0036068">
    <property type="term" value="P:light-independent chlorophyll biosynthetic process"/>
    <property type="evidence" value="ECO:0007669"/>
    <property type="project" value="UniProtKB-UniRule"/>
</dbReference>
<dbReference type="GO" id="GO:0019685">
    <property type="term" value="P:photosynthesis, dark reaction"/>
    <property type="evidence" value="ECO:0007669"/>
    <property type="project" value="InterPro"/>
</dbReference>
<dbReference type="Gene3D" id="1.20.89.20">
    <property type="match status" value="1"/>
</dbReference>
<dbReference type="Gene3D" id="3.40.50.1980">
    <property type="entry name" value="Nitrogenase molybdenum iron protein domain"/>
    <property type="match status" value="3"/>
</dbReference>
<dbReference type="Gene3D" id="1.10.8.550">
    <property type="entry name" value="Proto-chlorophyllide reductase 57 kD subunit B"/>
    <property type="match status" value="1"/>
</dbReference>
<dbReference type="HAMAP" id="MF_00353">
    <property type="entry name" value="ChlB_BchB"/>
    <property type="match status" value="1"/>
</dbReference>
<dbReference type="InterPro" id="IPR050152">
    <property type="entry name" value="ChlB/BchB/BchZ"/>
</dbReference>
<dbReference type="InterPro" id="IPR013580">
    <property type="entry name" value="LI-POR_suB-like_C"/>
</dbReference>
<dbReference type="InterPro" id="IPR000510">
    <property type="entry name" value="Nase/OxRdtase_comp1"/>
</dbReference>
<dbReference type="InterPro" id="IPR042298">
    <property type="entry name" value="P-CP_red_C"/>
</dbReference>
<dbReference type="InterPro" id="IPR005969">
    <property type="entry name" value="Protochl_reductB"/>
</dbReference>
<dbReference type="InterPro" id="IPR016209">
    <property type="entry name" value="Protochlorophyllide_Rdtase"/>
</dbReference>
<dbReference type="NCBIfam" id="TIGR01278">
    <property type="entry name" value="DPOR_BchB"/>
    <property type="match status" value="1"/>
</dbReference>
<dbReference type="NCBIfam" id="NF002790">
    <property type="entry name" value="PRK02910.1-4"/>
    <property type="match status" value="1"/>
</dbReference>
<dbReference type="PANTHER" id="PTHR33712">
    <property type="entry name" value="LIGHT-INDEPENDENT PROTOCHLOROPHYLLIDE REDUCTASE SUBUNIT B"/>
    <property type="match status" value="1"/>
</dbReference>
<dbReference type="PANTHER" id="PTHR33712:SF7">
    <property type="entry name" value="LIGHT-INDEPENDENT PROTOCHLOROPHYLLIDE REDUCTASE SUBUNIT B"/>
    <property type="match status" value="1"/>
</dbReference>
<dbReference type="Pfam" id="PF00148">
    <property type="entry name" value="Oxidored_nitro"/>
    <property type="match status" value="1"/>
</dbReference>
<dbReference type="Pfam" id="PF08369">
    <property type="entry name" value="PCP_red"/>
    <property type="match status" value="1"/>
</dbReference>
<dbReference type="PIRSF" id="PIRSF000163">
    <property type="entry name" value="PCP_ChlB"/>
    <property type="match status" value="1"/>
</dbReference>
<dbReference type="SUPFAM" id="SSF53807">
    <property type="entry name" value="Helical backbone' metal receptor"/>
    <property type="match status" value="1"/>
</dbReference>
<name>CHLB_PROM1</name>
<organism>
    <name type="scientific">Prochlorococcus marinus (strain NATL1A)</name>
    <dbReference type="NCBI Taxonomy" id="167555"/>
    <lineage>
        <taxon>Bacteria</taxon>
        <taxon>Bacillati</taxon>
        <taxon>Cyanobacteriota</taxon>
        <taxon>Cyanophyceae</taxon>
        <taxon>Synechococcales</taxon>
        <taxon>Prochlorococcaceae</taxon>
        <taxon>Prochlorococcus</taxon>
    </lineage>
</organism>
<protein>
    <recommendedName>
        <fullName evidence="1">Light-independent protochlorophyllide reductase subunit B</fullName>
        <shortName evidence="1">DPOR subunit B</shortName>
        <shortName evidence="1">LI-POR subunit B</shortName>
        <ecNumber evidence="1">1.3.7.7</ecNumber>
    </recommendedName>
</protein>